<protein>
    <recommendedName>
        <fullName evidence="1">Holliday junction branch migration complex subunit RuvA</fullName>
    </recommendedName>
</protein>
<accession>Q6MKB7</accession>
<proteinExistence type="inferred from homology"/>
<organism>
    <name type="scientific">Bdellovibrio bacteriovorus (strain ATCC 15356 / DSM 50701 / NCIMB 9529 / HD100)</name>
    <dbReference type="NCBI Taxonomy" id="264462"/>
    <lineage>
        <taxon>Bacteria</taxon>
        <taxon>Pseudomonadati</taxon>
        <taxon>Bdellovibrionota</taxon>
        <taxon>Bdellovibrionia</taxon>
        <taxon>Bdellovibrionales</taxon>
        <taxon>Pseudobdellovibrionaceae</taxon>
        <taxon>Bdellovibrio</taxon>
    </lineage>
</organism>
<name>RUVA_BDEBA</name>
<dbReference type="EMBL" id="BX842652">
    <property type="protein sequence ID" value="CAE80291.1"/>
    <property type="molecule type" value="Genomic_DNA"/>
</dbReference>
<dbReference type="RefSeq" id="WP_011164894.1">
    <property type="nucleotide sequence ID" value="NC_005363.1"/>
</dbReference>
<dbReference type="SMR" id="Q6MKB7"/>
<dbReference type="STRING" id="264462.Bd2488"/>
<dbReference type="GeneID" id="93013395"/>
<dbReference type="KEGG" id="bba:Bd2488"/>
<dbReference type="eggNOG" id="COG0632">
    <property type="taxonomic scope" value="Bacteria"/>
</dbReference>
<dbReference type="HOGENOM" id="CLU_087936_3_0_7"/>
<dbReference type="Proteomes" id="UP000008080">
    <property type="component" value="Chromosome"/>
</dbReference>
<dbReference type="GO" id="GO:0005737">
    <property type="term" value="C:cytoplasm"/>
    <property type="evidence" value="ECO:0007669"/>
    <property type="project" value="UniProtKB-SubCell"/>
</dbReference>
<dbReference type="GO" id="GO:0009379">
    <property type="term" value="C:Holliday junction helicase complex"/>
    <property type="evidence" value="ECO:0007669"/>
    <property type="project" value="InterPro"/>
</dbReference>
<dbReference type="GO" id="GO:0048476">
    <property type="term" value="C:Holliday junction resolvase complex"/>
    <property type="evidence" value="ECO:0007669"/>
    <property type="project" value="UniProtKB-UniRule"/>
</dbReference>
<dbReference type="GO" id="GO:0005524">
    <property type="term" value="F:ATP binding"/>
    <property type="evidence" value="ECO:0007669"/>
    <property type="project" value="InterPro"/>
</dbReference>
<dbReference type="GO" id="GO:0000400">
    <property type="term" value="F:four-way junction DNA binding"/>
    <property type="evidence" value="ECO:0007669"/>
    <property type="project" value="UniProtKB-UniRule"/>
</dbReference>
<dbReference type="GO" id="GO:0009378">
    <property type="term" value="F:four-way junction helicase activity"/>
    <property type="evidence" value="ECO:0007669"/>
    <property type="project" value="InterPro"/>
</dbReference>
<dbReference type="GO" id="GO:0006310">
    <property type="term" value="P:DNA recombination"/>
    <property type="evidence" value="ECO:0007669"/>
    <property type="project" value="UniProtKB-UniRule"/>
</dbReference>
<dbReference type="GO" id="GO:0006281">
    <property type="term" value="P:DNA repair"/>
    <property type="evidence" value="ECO:0007669"/>
    <property type="project" value="UniProtKB-UniRule"/>
</dbReference>
<dbReference type="CDD" id="cd14332">
    <property type="entry name" value="UBA_RuvA_C"/>
    <property type="match status" value="1"/>
</dbReference>
<dbReference type="Gene3D" id="1.10.150.20">
    <property type="entry name" value="5' to 3' exonuclease, C-terminal subdomain"/>
    <property type="match status" value="1"/>
</dbReference>
<dbReference type="Gene3D" id="2.40.50.140">
    <property type="entry name" value="Nucleic acid-binding proteins"/>
    <property type="match status" value="1"/>
</dbReference>
<dbReference type="HAMAP" id="MF_00031">
    <property type="entry name" value="DNA_HJ_migration_RuvA"/>
    <property type="match status" value="1"/>
</dbReference>
<dbReference type="InterPro" id="IPR013849">
    <property type="entry name" value="DNA_helicase_Holl-junc_RuvA_I"/>
</dbReference>
<dbReference type="InterPro" id="IPR003583">
    <property type="entry name" value="Hlx-hairpin-Hlx_DNA-bd_motif"/>
</dbReference>
<dbReference type="InterPro" id="IPR012340">
    <property type="entry name" value="NA-bd_OB-fold"/>
</dbReference>
<dbReference type="InterPro" id="IPR000085">
    <property type="entry name" value="RuvA"/>
</dbReference>
<dbReference type="InterPro" id="IPR010994">
    <property type="entry name" value="RuvA_2-like"/>
</dbReference>
<dbReference type="InterPro" id="IPR011114">
    <property type="entry name" value="RuvA_C"/>
</dbReference>
<dbReference type="NCBIfam" id="TIGR00084">
    <property type="entry name" value="ruvA"/>
    <property type="match status" value="1"/>
</dbReference>
<dbReference type="Pfam" id="PF14520">
    <property type="entry name" value="HHH_5"/>
    <property type="match status" value="1"/>
</dbReference>
<dbReference type="Pfam" id="PF07499">
    <property type="entry name" value="RuvA_C"/>
    <property type="match status" value="1"/>
</dbReference>
<dbReference type="Pfam" id="PF01330">
    <property type="entry name" value="RuvA_N"/>
    <property type="match status" value="1"/>
</dbReference>
<dbReference type="SMART" id="SM00278">
    <property type="entry name" value="HhH1"/>
    <property type="match status" value="2"/>
</dbReference>
<dbReference type="SUPFAM" id="SSF50249">
    <property type="entry name" value="Nucleic acid-binding proteins"/>
    <property type="match status" value="1"/>
</dbReference>
<dbReference type="SUPFAM" id="SSF47781">
    <property type="entry name" value="RuvA domain 2-like"/>
    <property type="match status" value="1"/>
</dbReference>
<gene>
    <name evidence="1" type="primary">ruvA</name>
    <name type="ordered locus">Bd2488</name>
</gene>
<feature type="chain" id="PRO_0000224846" description="Holliday junction branch migration complex subunit RuvA">
    <location>
        <begin position="1"/>
        <end position="196"/>
    </location>
</feature>
<feature type="region of interest" description="Domain I" evidence="1">
    <location>
        <begin position="1"/>
        <end position="65"/>
    </location>
</feature>
<feature type="region of interest" description="Domain II" evidence="1">
    <location>
        <begin position="66"/>
        <end position="140"/>
    </location>
</feature>
<feature type="region of interest" description="Flexible linker" evidence="1">
    <location>
        <begin position="140"/>
        <end position="144"/>
    </location>
</feature>
<feature type="region of interest" description="Domain III" evidence="1">
    <location>
        <begin position="145"/>
        <end position="196"/>
    </location>
</feature>
<comment type="function">
    <text evidence="1">The RuvA-RuvB-RuvC complex processes Holliday junction (HJ) DNA during genetic recombination and DNA repair, while the RuvA-RuvB complex plays an important role in the rescue of blocked DNA replication forks via replication fork reversal (RFR). RuvA specifically binds to HJ cruciform DNA, conferring on it an open structure. The RuvB hexamer acts as an ATP-dependent pump, pulling dsDNA into and through the RuvAB complex. HJ branch migration allows RuvC to scan DNA until it finds its consensus sequence, where it cleaves and resolves the cruciform DNA.</text>
</comment>
<comment type="subunit">
    <text evidence="1">Homotetramer. Forms an RuvA(8)-RuvB(12)-Holliday junction (HJ) complex. HJ DNA is sandwiched between 2 RuvA tetramers; dsDNA enters through RuvA and exits via RuvB. An RuvB hexamer assembles on each DNA strand where it exits the tetramer. Each RuvB hexamer is contacted by two RuvA subunits (via domain III) on 2 adjacent RuvB subunits; this complex drives branch migration. In the full resolvosome a probable DNA-RuvA(4)-RuvB(12)-RuvC(2) complex forms which resolves the HJ.</text>
</comment>
<comment type="subcellular location">
    <subcellularLocation>
        <location evidence="1">Cytoplasm</location>
    </subcellularLocation>
</comment>
<comment type="domain">
    <text evidence="1">Has three domains with a flexible linker between the domains II and III and assumes an 'L' shape. Domain III is highly mobile and contacts RuvB.</text>
</comment>
<comment type="similarity">
    <text evidence="1">Belongs to the RuvA family.</text>
</comment>
<evidence type="ECO:0000255" key="1">
    <source>
        <dbReference type="HAMAP-Rule" id="MF_00031"/>
    </source>
</evidence>
<reference key="1">
    <citation type="journal article" date="2004" name="Science">
        <title>A predator unmasked: life cycle of Bdellovibrio bacteriovorus from a genomic perspective.</title>
        <authorList>
            <person name="Rendulic S."/>
            <person name="Jagtap P."/>
            <person name="Rosinus A."/>
            <person name="Eppinger M."/>
            <person name="Baar C."/>
            <person name="Lanz C."/>
            <person name="Keller H."/>
            <person name="Lambert C."/>
            <person name="Evans K.J."/>
            <person name="Goesmann A."/>
            <person name="Meyer F."/>
            <person name="Sockett R.E."/>
            <person name="Schuster S.C."/>
        </authorList>
    </citation>
    <scope>NUCLEOTIDE SEQUENCE [LARGE SCALE GENOMIC DNA]</scope>
    <source>
        <strain>ATCC 15356 / DSM 50701 / NCIMB 9529 / HD100</strain>
    </source>
</reference>
<sequence>MIGYLRGKIIEVMNDSALIDVSGVGYEIHASSNTLGDLQALLGNDIIVWIHTHVREDALQLFGFHDKEEKNLFLSLLKVNGVGPKMALSILSGGRPAQIHEMIEAGNAKALSGLPKVGKKTAEQIILTLKGKLVSIEEGGVVAKAKSVAHTQITSALLNLGYKSQLVDQFVSSLPADIAVEDGIRKGFQTLSGGLS</sequence>
<keyword id="KW-0963">Cytoplasm</keyword>
<keyword id="KW-0227">DNA damage</keyword>
<keyword id="KW-0233">DNA recombination</keyword>
<keyword id="KW-0234">DNA repair</keyword>
<keyword id="KW-0238">DNA-binding</keyword>
<keyword id="KW-1185">Reference proteome</keyword>